<sequence length="138" mass="15176">MSNHRILHTMLRVGDLDKSIEFYTQVMGMSLLRKNENTEYKYTLAFLGYGDESQGAVIELTYNWGVADYEKGNAYGHIAIGVDDIYATCDTIKAAGGIVTREPGPVKGGTTHIAFVKDPDGYMIELIQNKQAHAGLEG</sequence>
<keyword id="KW-0456">Lyase</keyword>
<keyword id="KW-0479">Metal-binding</keyword>
<keyword id="KW-0533">Nickel</keyword>
<keyword id="KW-1185">Reference proteome</keyword>
<evidence type="ECO:0000250" key="1"/>
<evidence type="ECO:0000255" key="2">
    <source>
        <dbReference type="PROSITE-ProRule" id="PRU01163"/>
    </source>
</evidence>
<evidence type="ECO:0000305" key="3"/>
<proteinExistence type="inferred from homology"/>
<feature type="chain" id="PRO_0000168097" description="Probable lactoylglutathione lyase">
    <location>
        <begin position="1"/>
        <end position="138"/>
    </location>
</feature>
<feature type="domain" description="VOC" evidence="2">
    <location>
        <begin position="5"/>
        <end position="129"/>
    </location>
</feature>
<feature type="active site" description="Proton donor/acceptor" evidence="1">
    <location>
        <position position="125"/>
    </location>
</feature>
<feature type="binding site" evidence="1">
    <location>
        <position position="8"/>
    </location>
    <ligand>
        <name>Ni(2+)</name>
        <dbReference type="ChEBI" id="CHEBI:49786"/>
    </ligand>
</feature>
<feature type="binding site" evidence="1">
    <location>
        <position position="12"/>
    </location>
    <ligand>
        <name>substrate</name>
    </ligand>
</feature>
<feature type="binding site" evidence="1">
    <location>
        <position position="59"/>
    </location>
    <ligand>
        <name>Ni(2+)</name>
        <dbReference type="ChEBI" id="CHEBI:49786"/>
    </ligand>
</feature>
<feature type="binding site" evidence="1">
    <location>
        <position position="63"/>
    </location>
    <ligand>
        <name>substrate</name>
    </ligand>
</feature>
<feature type="binding site" evidence="1">
    <location>
        <position position="77"/>
    </location>
    <ligand>
        <name>Ni(2+)</name>
        <dbReference type="ChEBI" id="CHEBI:49786"/>
    </ligand>
</feature>
<feature type="binding site" evidence="1">
    <location>
        <position position="77"/>
    </location>
    <ligand>
        <name>substrate</name>
    </ligand>
</feature>
<feature type="binding site" evidence="1">
    <location>
        <position position="125"/>
    </location>
    <ligand>
        <name>Ni(2+)</name>
        <dbReference type="ChEBI" id="CHEBI:49786"/>
    </ligand>
</feature>
<gene>
    <name type="primary">gloA</name>
    <name type="ordered locus">VC_1010</name>
</gene>
<reference key="1">
    <citation type="journal article" date="2000" name="Nature">
        <title>DNA sequence of both chromosomes of the cholera pathogen Vibrio cholerae.</title>
        <authorList>
            <person name="Heidelberg J.F."/>
            <person name="Eisen J.A."/>
            <person name="Nelson W.C."/>
            <person name="Clayton R.A."/>
            <person name="Gwinn M.L."/>
            <person name="Dodson R.J."/>
            <person name="Haft D.H."/>
            <person name="Hickey E.K."/>
            <person name="Peterson J.D."/>
            <person name="Umayam L.A."/>
            <person name="Gill S.R."/>
            <person name="Nelson K.E."/>
            <person name="Read T.D."/>
            <person name="Tettelin H."/>
            <person name="Richardson D.L."/>
            <person name="Ermolaeva M.D."/>
            <person name="Vamathevan J.J."/>
            <person name="Bass S."/>
            <person name="Qin H."/>
            <person name="Dragoi I."/>
            <person name="Sellers P."/>
            <person name="McDonald L.A."/>
            <person name="Utterback T.R."/>
            <person name="Fleischmann R.D."/>
            <person name="Nierman W.C."/>
            <person name="White O."/>
            <person name="Salzberg S.L."/>
            <person name="Smith H.O."/>
            <person name="Colwell R.R."/>
            <person name="Mekalanos J.J."/>
            <person name="Venter J.C."/>
            <person name="Fraser C.M."/>
        </authorList>
    </citation>
    <scope>NUCLEOTIDE SEQUENCE [LARGE SCALE GENOMIC DNA]</scope>
    <source>
        <strain>ATCC 39315 / El Tor Inaba N16961</strain>
    </source>
</reference>
<dbReference type="EC" id="4.4.1.5"/>
<dbReference type="EMBL" id="AE003852">
    <property type="protein sequence ID" value="AAF94171.1"/>
    <property type="status" value="ALT_INIT"/>
    <property type="molecule type" value="Genomic_DNA"/>
</dbReference>
<dbReference type="PIR" id="H82251">
    <property type="entry name" value="H82251"/>
</dbReference>
<dbReference type="RefSeq" id="NP_230656.2">
    <property type="nucleotide sequence ID" value="NC_002505.1"/>
</dbReference>
<dbReference type="RefSeq" id="WP_000064966.1">
    <property type="nucleotide sequence ID" value="NZ_LT906614.1"/>
</dbReference>
<dbReference type="SMR" id="Q9KT93"/>
<dbReference type="STRING" id="243277.VC_1010"/>
<dbReference type="DNASU" id="2614263"/>
<dbReference type="EnsemblBacteria" id="AAF94171">
    <property type="protein sequence ID" value="AAF94171"/>
    <property type="gene ID" value="VC_1010"/>
</dbReference>
<dbReference type="GeneID" id="88785785"/>
<dbReference type="KEGG" id="vch:VC_1010"/>
<dbReference type="PATRIC" id="fig|243277.26.peg.964"/>
<dbReference type="eggNOG" id="COG0346">
    <property type="taxonomic scope" value="Bacteria"/>
</dbReference>
<dbReference type="HOGENOM" id="CLU_046006_8_1_6"/>
<dbReference type="UniPathway" id="UPA00619">
    <property type="reaction ID" value="UER00675"/>
</dbReference>
<dbReference type="PRO" id="PR:Q9KT93"/>
<dbReference type="Proteomes" id="UP000000584">
    <property type="component" value="Chromosome 1"/>
</dbReference>
<dbReference type="GO" id="GO:0005737">
    <property type="term" value="C:cytoplasm"/>
    <property type="evidence" value="ECO:0000318"/>
    <property type="project" value="GO_Central"/>
</dbReference>
<dbReference type="GO" id="GO:0004462">
    <property type="term" value="F:lactoylglutathione lyase activity"/>
    <property type="evidence" value="ECO:0000318"/>
    <property type="project" value="GO_Central"/>
</dbReference>
<dbReference type="GO" id="GO:0046872">
    <property type="term" value="F:metal ion binding"/>
    <property type="evidence" value="ECO:0007669"/>
    <property type="project" value="UniProtKB-KW"/>
</dbReference>
<dbReference type="GO" id="GO:0019243">
    <property type="term" value="P:methylglyoxal catabolic process to D-lactate via S-lactoyl-glutathione"/>
    <property type="evidence" value="ECO:0000318"/>
    <property type="project" value="GO_Central"/>
</dbReference>
<dbReference type="CDD" id="cd16358">
    <property type="entry name" value="GlxI_Ni"/>
    <property type="match status" value="1"/>
</dbReference>
<dbReference type="FunFam" id="3.10.180.10:FF:000002">
    <property type="entry name" value="Lactoylglutathione lyase"/>
    <property type="match status" value="1"/>
</dbReference>
<dbReference type="Gene3D" id="3.10.180.10">
    <property type="entry name" value="2,3-Dihydroxybiphenyl 1,2-Dioxygenase, domain 1"/>
    <property type="match status" value="1"/>
</dbReference>
<dbReference type="InterPro" id="IPR029068">
    <property type="entry name" value="Glyas_Bleomycin-R_OHBP_Dase"/>
</dbReference>
<dbReference type="InterPro" id="IPR004360">
    <property type="entry name" value="Glyas_Fos-R_dOase_dom"/>
</dbReference>
<dbReference type="InterPro" id="IPR004361">
    <property type="entry name" value="Glyoxalase_1"/>
</dbReference>
<dbReference type="InterPro" id="IPR018146">
    <property type="entry name" value="Glyoxalase_1_CS"/>
</dbReference>
<dbReference type="InterPro" id="IPR037523">
    <property type="entry name" value="VOC"/>
</dbReference>
<dbReference type="NCBIfam" id="TIGR00068">
    <property type="entry name" value="glyox_I"/>
    <property type="match status" value="1"/>
</dbReference>
<dbReference type="PANTHER" id="PTHR46036">
    <property type="entry name" value="LACTOYLGLUTATHIONE LYASE"/>
    <property type="match status" value="1"/>
</dbReference>
<dbReference type="PANTHER" id="PTHR46036:SF5">
    <property type="entry name" value="LACTOYLGLUTATHIONE LYASE"/>
    <property type="match status" value="1"/>
</dbReference>
<dbReference type="Pfam" id="PF00903">
    <property type="entry name" value="Glyoxalase"/>
    <property type="match status" value="1"/>
</dbReference>
<dbReference type="SUPFAM" id="SSF54593">
    <property type="entry name" value="Glyoxalase/Bleomycin resistance protein/Dihydroxybiphenyl dioxygenase"/>
    <property type="match status" value="1"/>
</dbReference>
<dbReference type="PROSITE" id="PS00934">
    <property type="entry name" value="GLYOXALASE_I_1"/>
    <property type="match status" value="1"/>
</dbReference>
<dbReference type="PROSITE" id="PS00935">
    <property type="entry name" value="GLYOXALASE_I_2"/>
    <property type="match status" value="1"/>
</dbReference>
<dbReference type="PROSITE" id="PS51819">
    <property type="entry name" value="VOC"/>
    <property type="match status" value="1"/>
</dbReference>
<comment type="function">
    <text evidence="1">Catalyzes the conversion of hemimercaptal, formed from methylglyoxal and glutathione, to S-lactoylglutathione.</text>
</comment>
<comment type="catalytic activity">
    <reaction>
        <text>(R)-S-lactoylglutathione = methylglyoxal + glutathione</text>
        <dbReference type="Rhea" id="RHEA:19069"/>
        <dbReference type="ChEBI" id="CHEBI:17158"/>
        <dbReference type="ChEBI" id="CHEBI:57474"/>
        <dbReference type="ChEBI" id="CHEBI:57925"/>
        <dbReference type="EC" id="4.4.1.5"/>
    </reaction>
</comment>
<comment type="cofactor">
    <cofactor evidence="1">
        <name>Ni(2+)</name>
        <dbReference type="ChEBI" id="CHEBI:49786"/>
    </cofactor>
    <text evidence="1">Binds 1 nickel ion per subunit.</text>
</comment>
<comment type="pathway">
    <text>Secondary metabolite metabolism; methylglyoxal degradation; (R)-lactate from methylglyoxal: step 1/2.</text>
</comment>
<comment type="similarity">
    <text evidence="3">Belongs to the glyoxalase I family.</text>
</comment>
<comment type="sequence caution" evidence="3">
    <conflict type="erroneous initiation">
        <sequence resource="EMBL-CDS" id="AAF94171"/>
    </conflict>
</comment>
<protein>
    <recommendedName>
        <fullName>Probable lactoylglutathione lyase</fullName>
        <ecNumber>4.4.1.5</ecNumber>
    </recommendedName>
    <alternativeName>
        <fullName>Aldoketomutase</fullName>
    </alternativeName>
    <alternativeName>
        <fullName>Glyoxalase I</fullName>
        <shortName>Glx I</shortName>
    </alternativeName>
    <alternativeName>
        <fullName>Ketone-aldehyde mutase</fullName>
    </alternativeName>
    <alternativeName>
        <fullName>Methylglyoxalase</fullName>
    </alternativeName>
    <alternativeName>
        <fullName>S-D-lactoylglutathione methylglyoxal lyase</fullName>
    </alternativeName>
</protein>
<name>LGUL_VIBCH</name>
<accession>Q9KT93</accession>
<organism>
    <name type="scientific">Vibrio cholerae serotype O1 (strain ATCC 39315 / El Tor Inaba N16961)</name>
    <dbReference type="NCBI Taxonomy" id="243277"/>
    <lineage>
        <taxon>Bacteria</taxon>
        <taxon>Pseudomonadati</taxon>
        <taxon>Pseudomonadota</taxon>
        <taxon>Gammaproteobacteria</taxon>
        <taxon>Vibrionales</taxon>
        <taxon>Vibrionaceae</taxon>
        <taxon>Vibrio</taxon>
    </lineage>
</organism>